<gene>
    <name evidence="1" type="primary">hemC</name>
    <name type="ordered locus">TT_C1638</name>
</gene>
<organism>
    <name type="scientific">Thermus thermophilus (strain ATCC BAA-163 / DSM 7039 / HB27)</name>
    <dbReference type="NCBI Taxonomy" id="262724"/>
    <lineage>
        <taxon>Bacteria</taxon>
        <taxon>Thermotogati</taxon>
        <taxon>Deinococcota</taxon>
        <taxon>Deinococci</taxon>
        <taxon>Thermales</taxon>
        <taxon>Thermaceae</taxon>
        <taxon>Thermus</taxon>
    </lineage>
</organism>
<proteinExistence type="inferred from homology"/>
<dbReference type="EC" id="2.5.1.61" evidence="1"/>
<dbReference type="EMBL" id="AE017221">
    <property type="protein sequence ID" value="AAS81980.1"/>
    <property type="molecule type" value="Genomic_DNA"/>
</dbReference>
<dbReference type="RefSeq" id="WP_011174006.1">
    <property type="nucleotide sequence ID" value="NC_005835.1"/>
</dbReference>
<dbReference type="SMR" id="Q72H57"/>
<dbReference type="GeneID" id="3168895"/>
<dbReference type="KEGG" id="tth:TT_C1638"/>
<dbReference type="eggNOG" id="COG0181">
    <property type="taxonomic scope" value="Bacteria"/>
</dbReference>
<dbReference type="HOGENOM" id="CLU_019704_0_2_0"/>
<dbReference type="OrthoDB" id="9810298at2"/>
<dbReference type="UniPathway" id="UPA00251">
    <property type="reaction ID" value="UER00319"/>
</dbReference>
<dbReference type="Proteomes" id="UP000000592">
    <property type="component" value="Chromosome"/>
</dbReference>
<dbReference type="GO" id="GO:0005737">
    <property type="term" value="C:cytoplasm"/>
    <property type="evidence" value="ECO:0007669"/>
    <property type="project" value="TreeGrafter"/>
</dbReference>
<dbReference type="GO" id="GO:0004418">
    <property type="term" value="F:hydroxymethylbilane synthase activity"/>
    <property type="evidence" value="ECO:0007669"/>
    <property type="project" value="UniProtKB-UniRule"/>
</dbReference>
<dbReference type="GO" id="GO:0006782">
    <property type="term" value="P:protoporphyrinogen IX biosynthetic process"/>
    <property type="evidence" value="ECO:0007669"/>
    <property type="project" value="UniProtKB-UniRule"/>
</dbReference>
<dbReference type="FunFam" id="3.40.190.10:FF:000005">
    <property type="entry name" value="Porphobilinogen deaminase"/>
    <property type="match status" value="1"/>
</dbReference>
<dbReference type="Gene3D" id="3.40.190.10">
    <property type="entry name" value="Periplasmic binding protein-like II"/>
    <property type="match status" value="2"/>
</dbReference>
<dbReference type="Gene3D" id="3.30.160.40">
    <property type="entry name" value="Porphobilinogen deaminase, C-terminal domain"/>
    <property type="match status" value="1"/>
</dbReference>
<dbReference type="HAMAP" id="MF_00260">
    <property type="entry name" value="Porphobil_deam"/>
    <property type="match status" value="1"/>
</dbReference>
<dbReference type="InterPro" id="IPR000860">
    <property type="entry name" value="HemC"/>
</dbReference>
<dbReference type="InterPro" id="IPR022419">
    <property type="entry name" value="Porphobilin_deaminase_cofac_BS"/>
</dbReference>
<dbReference type="InterPro" id="IPR022417">
    <property type="entry name" value="Porphobilin_deaminase_N"/>
</dbReference>
<dbReference type="InterPro" id="IPR022418">
    <property type="entry name" value="Porphobilinogen_deaminase_C"/>
</dbReference>
<dbReference type="InterPro" id="IPR036803">
    <property type="entry name" value="Porphobilinogen_deaminase_C_sf"/>
</dbReference>
<dbReference type="NCBIfam" id="TIGR00212">
    <property type="entry name" value="hemC"/>
    <property type="match status" value="1"/>
</dbReference>
<dbReference type="PANTHER" id="PTHR11557">
    <property type="entry name" value="PORPHOBILINOGEN DEAMINASE"/>
    <property type="match status" value="1"/>
</dbReference>
<dbReference type="PANTHER" id="PTHR11557:SF0">
    <property type="entry name" value="PORPHOBILINOGEN DEAMINASE"/>
    <property type="match status" value="1"/>
</dbReference>
<dbReference type="Pfam" id="PF01379">
    <property type="entry name" value="Porphobil_deam"/>
    <property type="match status" value="1"/>
</dbReference>
<dbReference type="Pfam" id="PF03900">
    <property type="entry name" value="Porphobil_deamC"/>
    <property type="match status" value="1"/>
</dbReference>
<dbReference type="PIRSF" id="PIRSF001438">
    <property type="entry name" value="4pyrrol_synth_OHMeBilane_synth"/>
    <property type="match status" value="1"/>
</dbReference>
<dbReference type="PRINTS" id="PR00151">
    <property type="entry name" value="PORPHBDMNASE"/>
</dbReference>
<dbReference type="SUPFAM" id="SSF53850">
    <property type="entry name" value="Periplasmic binding protein-like II"/>
    <property type="match status" value="1"/>
</dbReference>
<dbReference type="SUPFAM" id="SSF54782">
    <property type="entry name" value="Porphobilinogen deaminase (hydroxymethylbilane synthase), C-terminal domain"/>
    <property type="match status" value="1"/>
</dbReference>
<dbReference type="PROSITE" id="PS00533">
    <property type="entry name" value="PORPHOBILINOGEN_DEAM"/>
    <property type="match status" value="1"/>
</dbReference>
<feature type="chain" id="PRO_0000143004" description="Porphobilinogen deaminase">
    <location>
        <begin position="1"/>
        <end position="301"/>
    </location>
</feature>
<feature type="modified residue" description="S-(dipyrrolylmethanemethyl)cysteine" evidence="1">
    <location>
        <position position="235"/>
    </location>
</feature>
<keyword id="KW-0627">Porphyrin biosynthesis</keyword>
<keyword id="KW-0808">Transferase</keyword>
<evidence type="ECO:0000255" key="1">
    <source>
        <dbReference type="HAMAP-Rule" id="MF_00260"/>
    </source>
</evidence>
<comment type="function">
    <text evidence="1">Tetrapolymerization of the monopyrrole PBG into the hydroxymethylbilane pre-uroporphyrinogen in several discrete steps.</text>
</comment>
<comment type="catalytic activity">
    <reaction evidence="1">
        <text>4 porphobilinogen + H2O = hydroxymethylbilane + 4 NH4(+)</text>
        <dbReference type="Rhea" id="RHEA:13185"/>
        <dbReference type="ChEBI" id="CHEBI:15377"/>
        <dbReference type="ChEBI" id="CHEBI:28938"/>
        <dbReference type="ChEBI" id="CHEBI:57845"/>
        <dbReference type="ChEBI" id="CHEBI:58126"/>
        <dbReference type="EC" id="2.5.1.61"/>
    </reaction>
</comment>
<comment type="cofactor">
    <cofactor evidence="1">
        <name>dipyrromethane</name>
        <dbReference type="ChEBI" id="CHEBI:60342"/>
    </cofactor>
    <text evidence="1">Binds 1 dipyrromethane group covalently.</text>
</comment>
<comment type="pathway">
    <text evidence="1">Porphyrin-containing compound metabolism; protoporphyrin-IX biosynthesis; coproporphyrinogen-III from 5-aminolevulinate: step 2/4.</text>
</comment>
<comment type="subunit">
    <text evidence="1">Monomer.</text>
</comment>
<comment type="miscellaneous">
    <text evidence="1">The porphobilinogen subunits are added to the dipyrromethane group.</text>
</comment>
<comment type="similarity">
    <text evidence="1">Belongs to the HMBS family.</text>
</comment>
<accession>Q72H57</accession>
<sequence length="301" mass="32822">MRVVVVGTRGSALALAQTRFVVERLKETWPETEFKIRTIKTRGDQGASPREEAIFVKEIQEALLSREIDIAVHSLKDLPTESPRGLKIASVPRRQDPRDVFLGKAAKRLKDLPPGAVVGTSSVRRKAQILALRPDLVVRDLRGNVDTRLAALGNGEYDGIVLAAAGLIRLDLRNRIDEFLDPGEVLPAPGQGALALEVREGDDLAEELCYALHHPPSYHRVRAERAFLRGLGAGCLAPVGALAHVEEDGTLRLEGVLLTPDGKSFIRAEIEGDVSEAEELGLDLARDVLEQGGREILAQIR</sequence>
<protein>
    <recommendedName>
        <fullName evidence="1">Porphobilinogen deaminase</fullName>
        <shortName evidence="1">PBG</shortName>
        <ecNumber evidence="1">2.5.1.61</ecNumber>
    </recommendedName>
    <alternativeName>
        <fullName evidence="1">Hydroxymethylbilane synthase</fullName>
        <shortName evidence="1">HMBS</shortName>
    </alternativeName>
    <alternativeName>
        <fullName evidence="1">Pre-uroporphyrinogen synthase</fullName>
    </alternativeName>
</protein>
<name>HEM3_THET2</name>
<reference key="1">
    <citation type="journal article" date="2004" name="Nat. Biotechnol.">
        <title>The genome sequence of the extreme thermophile Thermus thermophilus.</title>
        <authorList>
            <person name="Henne A."/>
            <person name="Brueggemann H."/>
            <person name="Raasch C."/>
            <person name="Wiezer A."/>
            <person name="Hartsch T."/>
            <person name="Liesegang H."/>
            <person name="Johann A."/>
            <person name="Lienard T."/>
            <person name="Gohl O."/>
            <person name="Martinez-Arias R."/>
            <person name="Jacobi C."/>
            <person name="Starkuviene V."/>
            <person name="Schlenczeck S."/>
            <person name="Dencker S."/>
            <person name="Huber R."/>
            <person name="Klenk H.-P."/>
            <person name="Kramer W."/>
            <person name="Merkl R."/>
            <person name="Gottschalk G."/>
            <person name="Fritz H.-J."/>
        </authorList>
    </citation>
    <scope>NUCLEOTIDE SEQUENCE [LARGE SCALE GENOMIC DNA]</scope>
    <source>
        <strain>ATCC BAA-163 / DSM 7039 / HB27</strain>
    </source>
</reference>